<name>MNHC2_STAEQ</name>
<dbReference type="EMBL" id="CP000029">
    <property type="protein sequence ID" value="AAW53726.1"/>
    <property type="molecule type" value="Genomic_DNA"/>
</dbReference>
<dbReference type="RefSeq" id="WP_001832057.1">
    <property type="nucleotide sequence ID" value="NC_002976.3"/>
</dbReference>
<dbReference type="SMR" id="Q5HRB0"/>
<dbReference type="STRING" id="176279.SERP0283"/>
<dbReference type="GeneID" id="50019444"/>
<dbReference type="KEGG" id="ser:SERP0283"/>
<dbReference type="eggNOG" id="COG1006">
    <property type="taxonomic scope" value="Bacteria"/>
</dbReference>
<dbReference type="HOGENOM" id="CLU_082058_3_1_9"/>
<dbReference type="Proteomes" id="UP000000531">
    <property type="component" value="Chromosome"/>
</dbReference>
<dbReference type="GO" id="GO:0005886">
    <property type="term" value="C:plasma membrane"/>
    <property type="evidence" value="ECO:0007669"/>
    <property type="project" value="UniProtKB-SubCell"/>
</dbReference>
<dbReference type="GO" id="GO:0015297">
    <property type="term" value="F:antiporter activity"/>
    <property type="evidence" value="ECO:0007669"/>
    <property type="project" value="UniProtKB-KW"/>
</dbReference>
<dbReference type="GO" id="GO:0006811">
    <property type="term" value="P:monoatomic ion transport"/>
    <property type="evidence" value="ECO:0007669"/>
    <property type="project" value="UniProtKB-KW"/>
</dbReference>
<dbReference type="Gene3D" id="1.10.287.3510">
    <property type="match status" value="1"/>
</dbReference>
<dbReference type="InterPro" id="IPR050601">
    <property type="entry name" value="CPA3_antiporter_subunitC"/>
</dbReference>
<dbReference type="InterPro" id="IPR039428">
    <property type="entry name" value="NUOK/Mnh_C1-like"/>
</dbReference>
<dbReference type="NCBIfam" id="NF009303">
    <property type="entry name" value="PRK12660.1"/>
    <property type="match status" value="1"/>
</dbReference>
<dbReference type="PANTHER" id="PTHR34583">
    <property type="entry name" value="ANTIPORTER SUBUNIT MNHC2-RELATED"/>
    <property type="match status" value="1"/>
</dbReference>
<dbReference type="PANTHER" id="PTHR34583:SF2">
    <property type="entry name" value="ANTIPORTER SUBUNIT MNHC2-RELATED"/>
    <property type="match status" value="1"/>
</dbReference>
<dbReference type="Pfam" id="PF00420">
    <property type="entry name" value="Oxidored_q2"/>
    <property type="match status" value="1"/>
</dbReference>
<evidence type="ECO:0000250" key="1"/>
<evidence type="ECO:0000255" key="2"/>
<evidence type="ECO:0000305" key="3"/>
<reference key="1">
    <citation type="journal article" date="2005" name="J. Bacteriol.">
        <title>Insights on evolution of virulence and resistance from the complete genome analysis of an early methicillin-resistant Staphylococcus aureus strain and a biofilm-producing methicillin-resistant Staphylococcus epidermidis strain.</title>
        <authorList>
            <person name="Gill S.R."/>
            <person name="Fouts D.E."/>
            <person name="Archer G.L."/>
            <person name="Mongodin E.F."/>
            <person name="DeBoy R.T."/>
            <person name="Ravel J."/>
            <person name="Paulsen I.T."/>
            <person name="Kolonay J.F."/>
            <person name="Brinkac L.M."/>
            <person name="Beanan M.J."/>
            <person name="Dodson R.J."/>
            <person name="Daugherty S.C."/>
            <person name="Madupu R."/>
            <person name="Angiuoli S.V."/>
            <person name="Durkin A.S."/>
            <person name="Haft D.H."/>
            <person name="Vamathevan J.J."/>
            <person name="Khouri H."/>
            <person name="Utterback T.R."/>
            <person name="Lee C."/>
            <person name="Dimitrov G."/>
            <person name="Jiang L."/>
            <person name="Qin H."/>
            <person name="Weidman J."/>
            <person name="Tran K."/>
            <person name="Kang K.H."/>
            <person name="Hance I.R."/>
            <person name="Nelson K.E."/>
            <person name="Fraser C.M."/>
        </authorList>
    </citation>
    <scope>NUCLEOTIDE SEQUENCE [LARGE SCALE GENOMIC DNA]</scope>
    <source>
        <strain>ATCC 35984 / DSM 28319 / BCRC 17069 / CCUG 31568 / BM 3577 / RP62A</strain>
    </source>
</reference>
<gene>
    <name type="primary">mnhC2</name>
    <name type="synonym">mrpC2</name>
    <name type="ordered locus">SERP0283</name>
</gene>
<keyword id="KW-0050">Antiport</keyword>
<keyword id="KW-1003">Cell membrane</keyword>
<keyword id="KW-0406">Ion transport</keyword>
<keyword id="KW-0472">Membrane</keyword>
<keyword id="KW-1185">Reference proteome</keyword>
<keyword id="KW-0812">Transmembrane</keyword>
<keyword id="KW-1133">Transmembrane helix</keyword>
<keyword id="KW-0813">Transport</keyword>
<sequence length="114" mass="12654">MNLILLLVIGFLVFIGTYMILSINLIRIVIGISIYTHAGNLIIMSMGKYGPHMSEPLIQGHAQNFVDPLLQAIVLTAIVIGFGMTAFLLVLIYRTYRVTKEDEISALKGDEDDE</sequence>
<feature type="chain" id="PRO_0000372263" description="Putative antiporter subunit mnhC2">
    <location>
        <begin position="1"/>
        <end position="114"/>
    </location>
</feature>
<feature type="transmembrane region" description="Helical" evidence="2">
    <location>
        <begin position="3"/>
        <end position="23"/>
    </location>
</feature>
<feature type="transmembrane region" description="Helical" evidence="2">
    <location>
        <begin position="25"/>
        <end position="45"/>
    </location>
</feature>
<feature type="transmembrane region" description="Helical" evidence="2">
    <location>
        <begin position="72"/>
        <end position="92"/>
    </location>
</feature>
<accession>Q5HRB0</accession>
<protein>
    <recommendedName>
        <fullName>Putative antiporter subunit mnhC2</fullName>
    </recommendedName>
    <alternativeName>
        <fullName>Mrp complex subunit C2</fullName>
    </alternativeName>
    <alternativeName>
        <fullName>Putative NADH-ubiquinone oxidoreductase subunit mnhC2</fullName>
    </alternativeName>
</protein>
<proteinExistence type="inferred from homology"/>
<comment type="subunit">
    <text evidence="1">May form a heterooligomeric complex that consists of seven subunits: mnhA2, mnhB2, mnhC2, mnhD2, mnhE2, mnhF2 and mnhG2.</text>
</comment>
<comment type="subcellular location">
    <subcellularLocation>
        <location evidence="3">Cell membrane</location>
        <topology evidence="3">Multi-pass membrane protein</topology>
    </subcellularLocation>
</comment>
<comment type="similarity">
    <text evidence="3">Belongs to the CPA3 antiporters (TC 2.A.63) subunit C family.</text>
</comment>
<organism>
    <name type="scientific">Staphylococcus epidermidis (strain ATCC 35984 / DSM 28319 / BCRC 17069 / CCUG 31568 / BM 3577 / RP62A)</name>
    <dbReference type="NCBI Taxonomy" id="176279"/>
    <lineage>
        <taxon>Bacteria</taxon>
        <taxon>Bacillati</taxon>
        <taxon>Bacillota</taxon>
        <taxon>Bacilli</taxon>
        <taxon>Bacillales</taxon>
        <taxon>Staphylococcaceae</taxon>
        <taxon>Staphylococcus</taxon>
    </lineage>
</organism>